<sequence>MTSNEELLQNYCSILFTYKTIGISNLHLYYFRETEIKSLRQLINAEFAILQTCNRVEIYLYSNTNTISEINKMIQYLNNVHNEPIGNQARVICGKDSIKHLFLVASGADSLSIGEYEILSQIRSTIDMFKKLGFSGKYLQILFERAIKVGRKVREETSISKGKVGIYSLAIDEAKRQFNNFYDRKIVIVGAGEMGQKIANMLYNEGVKNVTIMNRTVEKAKQLALKFGYNYEKLDLDKLGSFDIAFISISHENLRLENKWNTLIVDITVPPLFTGNNVITLEELEKISKLNFKAREEELVKINKLVEDGIDELIYDYKKEIYSEFMSKIMKRVETIRENEIVRAYKELEKLGINNQQVKEILDLMTRSIIKKSFQPLFDNVRSLVFDGENSINYINFLIDIFKDGNIPIFETKKIKKKQISKRSSS</sequence>
<reference key="1">
    <citation type="journal article" date="2009" name="Proc. Natl. Acad. Sci. U.S.A.">
        <title>Biogeography of the Sulfolobus islandicus pan-genome.</title>
        <authorList>
            <person name="Reno M.L."/>
            <person name="Held N.L."/>
            <person name="Fields C.J."/>
            <person name="Burke P.V."/>
            <person name="Whitaker R.J."/>
        </authorList>
    </citation>
    <scope>NUCLEOTIDE SEQUENCE [LARGE SCALE GENOMIC DNA]</scope>
    <source>
        <strain>M.14.25 / Kamchatka #1</strain>
    </source>
</reference>
<protein>
    <recommendedName>
        <fullName evidence="1">Glutamyl-tRNA reductase</fullName>
        <shortName evidence="1">GluTR</shortName>
        <ecNumber evidence="1">1.2.1.70</ecNumber>
    </recommendedName>
</protein>
<accession>C3MYE2</accession>
<gene>
    <name evidence="1" type="primary">hemA</name>
    <name type="ordered locus">M1425_1955</name>
</gene>
<feature type="chain" id="PRO_1000202645" description="Glutamyl-tRNA reductase">
    <location>
        <begin position="1"/>
        <end position="426"/>
    </location>
</feature>
<feature type="active site" description="Nucleophile" evidence="1">
    <location>
        <position position="53"/>
    </location>
</feature>
<feature type="binding site" evidence="1">
    <location>
        <begin position="52"/>
        <end position="55"/>
    </location>
    <ligand>
        <name>substrate</name>
    </ligand>
</feature>
<feature type="binding site" evidence="1">
    <location>
        <position position="110"/>
    </location>
    <ligand>
        <name>substrate</name>
    </ligand>
</feature>
<feature type="binding site" evidence="1">
    <location>
        <begin position="115"/>
        <end position="117"/>
    </location>
    <ligand>
        <name>substrate</name>
    </ligand>
</feature>
<feature type="binding site" evidence="1">
    <location>
        <position position="121"/>
    </location>
    <ligand>
        <name>substrate</name>
    </ligand>
</feature>
<feature type="binding site" evidence="1">
    <location>
        <begin position="190"/>
        <end position="195"/>
    </location>
    <ligand>
        <name>NADP(+)</name>
        <dbReference type="ChEBI" id="CHEBI:58349"/>
    </ligand>
</feature>
<feature type="site" description="Important for activity" evidence="1">
    <location>
        <position position="100"/>
    </location>
</feature>
<comment type="function">
    <text evidence="1">Catalyzes the NADPH-dependent reduction of glutamyl-tRNA(Glu) to glutamate 1-semialdehyde (GSA).</text>
</comment>
<comment type="catalytic activity">
    <reaction evidence="1">
        <text>(S)-4-amino-5-oxopentanoate + tRNA(Glu) + NADP(+) = L-glutamyl-tRNA(Glu) + NADPH + H(+)</text>
        <dbReference type="Rhea" id="RHEA:12344"/>
        <dbReference type="Rhea" id="RHEA-COMP:9663"/>
        <dbReference type="Rhea" id="RHEA-COMP:9680"/>
        <dbReference type="ChEBI" id="CHEBI:15378"/>
        <dbReference type="ChEBI" id="CHEBI:57501"/>
        <dbReference type="ChEBI" id="CHEBI:57783"/>
        <dbReference type="ChEBI" id="CHEBI:58349"/>
        <dbReference type="ChEBI" id="CHEBI:78442"/>
        <dbReference type="ChEBI" id="CHEBI:78520"/>
        <dbReference type="EC" id="1.2.1.70"/>
    </reaction>
</comment>
<comment type="pathway">
    <text evidence="1">Porphyrin-containing compound metabolism; protoporphyrin-IX biosynthesis; 5-aminolevulinate from L-glutamyl-tRNA(Glu): step 1/2.</text>
</comment>
<comment type="subunit">
    <text evidence="1">Homodimer.</text>
</comment>
<comment type="domain">
    <text evidence="1">Possesses an unusual extended V-shaped dimeric structure with each monomer consisting of three distinct domains arranged along a curved 'spinal' alpha-helix. The N-terminal catalytic domain specifically recognizes the glutamate moiety of the substrate. The second domain is the NADPH-binding domain, and the third C-terminal domain is responsible for dimerization.</text>
</comment>
<comment type="miscellaneous">
    <text evidence="1">During catalysis, the active site Cys acts as a nucleophile attacking the alpha-carbonyl group of tRNA-bound glutamate with the formation of a thioester intermediate between enzyme and glutamate, and the concomitant release of tRNA(Glu). The thioester intermediate is finally reduced by direct hydride transfer from NADPH, to form the product GSA.</text>
</comment>
<comment type="similarity">
    <text evidence="1">Belongs to the glutamyl-tRNA reductase family.</text>
</comment>
<name>HEM1_SACI4</name>
<proteinExistence type="inferred from homology"/>
<keyword id="KW-0521">NADP</keyword>
<keyword id="KW-0560">Oxidoreductase</keyword>
<keyword id="KW-0627">Porphyrin biosynthesis</keyword>
<organism>
    <name type="scientific">Saccharolobus islandicus (strain M.14.25 / Kamchatka #1)</name>
    <name type="common">Sulfolobus islandicus</name>
    <dbReference type="NCBI Taxonomy" id="427317"/>
    <lineage>
        <taxon>Archaea</taxon>
        <taxon>Thermoproteota</taxon>
        <taxon>Thermoprotei</taxon>
        <taxon>Sulfolobales</taxon>
        <taxon>Sulfolobaceae</taxon>
        <taxon>Saccharolobus</taxon>
    </lineage>
</organism>
<dbReference type="EC" id="1.2.1.70" evidence="1"/>
<dbReference type="EMBL" id="CP001400">
    <property type="protein sequence ID" value="ACP38699.1"/>
    <property type="molecule type" value="Genomic_DNA"/>
</dbReference>
<dbReference type="RefSeq" id="WP_012711926.1">
    <property type="nucleotide sequence ID" value="NC_012588.1"/>
</dbReference>
<dbReference type="SMR" id="C3MYE2"/>
<dbReference type="KEGG" id="sia:M1425_1955"/>
<dbReference type="HOGENOM" id="CLU_035113_0_0_2"/>
<dbReference type="UniPathway" id="UPA00251">
    <property type="reaction ID" value="UER00316"/>
</dbReference>
<dbReference type="Proteomes" id="UP000001350">
    <property type="component" value="Chromosome"/>
</dbReference>
<dbReference type="GO" id="GO:0008883">
    <property type="term" value="F:glutamyl-tRNA reductase activity"/>
    <property type="evidence" value="ECO:0007669"/>
    <property type="project" value="UniProtKB-UniRule"/>
</dbReference>
<dbReference type="GO" id="GO:0050661">
    <property type="term" value="F:NADP binding"/>
    <property type="evidence" value="ECO:0007669"/>
    <property type="project" value="InterPro"/>
</dbReference>
<dbReference type="GO" id="GO:0019353">
    <property type="term" value="P:protoporphyrinogen IX biosynthetic process from glutamate"/>
    <property type="evidence" value="ECO:0007669"/>
    <property type="project" value="TreeGrafter"/>
</dbReference>
<dbReference type="CDD" id="cd05213">
    <property type="entry name" value="NAD_bind_Glutamyl_tRNA_reduct"/>
    <property type="match status" value="1"/>
</dbReference>
<dbReference type="FunFam" id="3.30.460.30:FF:000002">
    <property type="entry name" value="Glutamyl-tRNA reductase"/>
    <property type="match status" value="1"/>
</dbReference>
<dbReference type="Gene3D" id="3.30.460.30">
    <property type="entry name" value="Glutamyl-tRNA reductase, N-terminal domain"/>
    <property type="match status" value="1"/>
</dbReference>
<dbReference type="Gene3D" id="3.40.50.720">
    <property type="entry name" value="NAD(P)-binding Rossmann-like Domain"/>
    <property type="match status" value="1"/>
</dbReference>
<dbReference type="HAMAP" id="MF_00087">
    <property type="entry name" value="Glu_tRNA_reductase"/>
    <property type="match status" value="1"/>
</dbReference>
<dbReference type="InterPro" id="IPR000343">
    <property type="entry name" value="4pyrrol_synth_GluRdtase"/>
</dbReference>
<dbReference type="InterPro" id="IPR015896">
    <property type="entry name" value="4pyrrol_synth_GluRdtase_dimer"/>
</dbReference>
<dbReference type="InterPro" id="IPR015895">
    <property type="entry name" value="4pyrrol_synth_GluRdtase_N"/>
</dbReference>
<dbReference type="InterPro" id="IPR018214">
    <property type="entry name" value="GluRdtase_CS"/>
</dbReference>
<dbReference type="InterPro" id="IPR036453">
    <property type="entry name" value="GluRdtase_dimer_dom_sf"/>
</dbReference>
<dbReference type="InterPro" id="IPR036343">
    <property type="entry name" value="GluRdtase_N_sf"/>
</dbReference>
<dbReference type="InterPro" id="IPR036291">
    <property type="entry name" value="NAD(P)-bd_dom_sf"/>
</dbReference>
<dbReference type="InterPro" id="IPR006151">
    <property type="entry name" value="Shikm_DH/Glu-tRNA_Rdtase"/>
</dbReference>
<dbReference type="NCBIfam" id="TIGR01035">
    <property type="entry name" value="hemA"/>
    <property type="match status" value="1"/>
</dbReference>
<dbReference type="NCBIfam" id="NF000751">
    <property type="entry name" value="PRK00045.4-1"/>
    <property type="match status" value="1"/>
</dbReference>
<dbReference type="NCBIfam" id="NF000752">
    <property type="entry name" value="PRK00045.4-2"/>
    <property type="match status" value="1"/>
</dbReference>
<dbReference type="PANTHER" id="PTHR43013">
    <property type="entry name" value="GLUTAMYL-TRNA REDUCTASE"/>
    <property type="match status" value="1"/>
</dbReference>
<dbReference type="PANTHER" id="PTHR43013:SF1">
    <property type="entry name" value="GLUTAMYL-TRNA REDUCTASE"/>
    <property type="match status" value="1"/>
</dbReference>
<dbReference type="Pfam" id="PF00745">
    <property type="entry name" value="GlutR_dimer"/>
    <property type="match status" value="1"/>
</dbReference>
<dbReference type="Pfam" id="PF05201">
    <property type="entry name" value="GlutR_N"/>
    <property type="match status" value="1"/>
</dbReference>
<dbReference type="Pfam" id="PF01488">
    <property type="entry name" value="Shikimate_DH"/>
    <property type="match status" value="1"/>
</dbReference>
<dbReference type="PIRSF" id="PIRSF000445">
    <property type="entry name" value="4pyrrol_synth_GluRdtase"/>
    <property type="match status" value="1"/>
</dbReference>
<dbReference type="SUPFAM" id="SSF69742">
    <property type="entry name" value="Glutamyl tRNA-reductase catalytic, N-terminal domain"/>
    <property type="match status" value="1"/>
</dbReference>
<dbReference type="SUPFAM" id="SSF69075">
    <property type="entry name" value="Glutamyl tRNA-reductase dimerization domain"/>
    <property type="match status" value="1"/>
</dbReference>
<dbReference type="SUPFAM" id="SSF51735">
    <property type="entry name" value="NAD(P)-binding Rossmann-fold domains"/>
    <property type="match status" value="1"/>
</dbReference>
<dbReference type="PROSITE" id="PS00747">
    <property type="entry name" value="GLUTR"/>
    <property type="match status" value="1"/>
</dbReference>
<evidence type="ECO:0000255" key="1">
    <source>
        <dbReference type="HAMAP-Rule" id="MF_00087"/>
    </source>
</evidence>